<sequence>MNKEEMNARQKKIRNFSIIAHIDHGKSTLADRILEQTGALTHREMKNQLLDSMDLERERGITIKLNAVQLKYKAKDGETYIFHLIDTPGHVDFTYEVSRSLAACEGAILVVDAAQGIEAQTLANVYLALDNDLEILPVINKIDLPAADPERVREEIEDVIGLDASDAVLASAKSGIGIEDILEQIVEKVPEPSGDVNKPLKALIFDSVFDAYRGVIANIRIMDGVVKAGDRIKMMSNGKEFEVTEVGVFSPKATPRDELLVGDVGYLTAAIKNVGDTRVGDTITLANNPAEEALDGYRKLNPMVYCGLYPIDSSKYNDLRDALEKLELNDSALQFEAETSQALGFGFRCGFLGLLHMEIIQERIEREFNIDLITTAPSVIYHVNLTDGSNIVVDNPAEMPEPGVIESVEEPYVKATVMVPNDYVGAVMELAQNKRGNFITMEYLDDIRVSIVYEIPLSEIVYDFFDQLKSSTKGYASFDYELIGYKASKLVKMDILLNAEKVDALSFIVHRDFAYERGKIIVEKLKELIPRQQFEVPIQAAIATKIVSRSTIKALRKNVLAKCYGGDVSRKRKLLEKQKEGKKRMKQIGSVEVPQEAFMAILKMDESK</sequence>
<proteinExistence type="inferred from homology"/>
<name>LEPA_LISMC</name>
<reference key="1">
    <citation type="journal article" date="2012" name="BMC Genomics">
        <title>Comparative genomics and transcriptomics of lineages I, II, and III strains of Listeria monocytogenes.</title>
        <authorList>
            <person name="Hain T."/>
            <person name="Ghai R."/>
            <person name="Billion A."/>
            <person name="Kuenne C.T."/>
            <person name="Steinweg C."/>
            <person name="Izar B."/>
            <person name="Mohamed W."/>
            <person name="Mraheil M."/>
            <person name="Domann E."/>
            <person name="Schaffrath S."/>
            <person name="Karst U."/>
            <person name="Goesmann A."/>
            <person name="Oehm S."/>
            <person name="Puhler A."/>
            <person name="Merkl R."/>
            <person name="Vorwerk S."/>
            <person name="Glaser P."/>
            <person name="Garrido P."/>
            <person name="Rusniok C."/>
            <person name="Buchrieser C."/>
            <person name="Goebel W."/>
            <person name="Chakraborty T."/>
        </authorList>
    </citation>
    <scope>NUCLEOTIDE SEQUENCE [LARGE SCALE GENOMIC DNA]</scope>
    <source>
        <strain>CLIP80459</strain>
    </source>
</reference>
<keyword id="KW-1003">Cell membrane</keyword>
<keyword id="KW-0342">GTP-binding</keyword>
<keyword id="KW-0378">Hydrolase</keyword>
<keyword id="KW-0472">Membrane</keyword>
<keyword id="KW-0547">Nucleotide-binding</keyword>
<keyword id="KW-0648">Protein biosynthesis</keyword>
<protein>
    <recommendedName>
        <fullName evidence="1">Elongation factor 4</fullName>
        <shortName evidence="1">EF-4</shortName>
        <ecNumber evidence="1">3.6.5.n1</ecNumber>
    </recommendedName>
    <alternativeName>
        <fullName evidence="1">Ribosomal back-translocase LepA</fullName>
    </alternativeName>
</protein>
<gene>
    <name evidence="1" type="primary">lepA</name>
    <name type="ordered locus">Lm4b_01489</name>
</gene>
<dbReference type="EC" id="3.6.5.n1" evidence="1"/>
<dbReference type="EMBL" id="FM242711">
    <property type="protein sequence ID" value="CAS05251.1"/>
    <property type="molecule type" value="Genomic_DNA"/>
</dbReference>
<dbReference type="RefSeq" id="WP_003726525.1">
    <property type="nucleotide sequence ID" value="NC_012488.1"/>
</dbReference>
<dbReference type="SMR" id="C1KVC6"/>
<dbReference type="GeneID" id="86846403"/>
<dbReference type="KEGG" id="lmc:Lm4b_01489"/>
<dbReference type="HOGENOM" id="CLU_009995_3_3_9"/>
<dbReference type="GO" id="GO:0005886">
    <property type="term" value="C:plasma membrane"/>
    <property type="evidence" value="ECO:0007669"/>
    <property type="project" value="UniProtKB-SubCell"/>
</dbReference>
<dbReference type="GO" id="GO:0005525">
    <property type="term" value="F:GTP binding"/>
    <property type="evidence" value="ECO:0007669"/>
    <property type="project" value="UniProtKB-UniRule"/>
</dbReference>
<dbReference type="GO" id="GO:0003924">
    <property type="term" value="F:GTPase activity"/>
    <property type="evidence" value="ECO:0007669"/>
    <property type="project" value="UniProtKB-UniRule"/>
</dbReference>
<dbReference type="GO" id="GO:0043022">
    <property type="term" value="F:ribosome binding"/>
    <property type="evidence" value="ECO:0007669"/>
    <property type="project" value="UniProtKB-UniRule"/>
</dbReference>
<dbReference type="GO" id="GO:0003746">
    <property type="term" value="F:translation elongation factor activity"/>
    <property type="evidence" value="ECO:0007669"/>
    <property type="project" value="UniProtKB-UniRule"/>
</dbReference>
<dbReference type="GO" id="GO:0045727">
    <property type="term" value="P:positive regulation of translation"/>
    <property type="evidence" value="ECO:0007669"/>
    <property type="project" value="UniProtKB-UniRule"/>
</dbReference>
<dbReference type="CDD" id="cd03699">
    <property type="entry name" value="EF4_II"/>
    <property type="match status" value="1"/>
</dbReference>
<dbReference type="CDD" id="cd16260">
    <property type="entry name" value="EF4_III"/>
    <property type="match status" value="1"/>
</dbReference>
<dbReference type="CDD" id="cd01890">
    <property type="entry name" value="LepA"/>
    <property type="match status" value="1"/>
</dbReference>
<dbReference type="CDD" id="cd03709">
    <property type="entry name" value="lepA_C"/>
    <property type="match status" value="1"/>
</dbReference>
<dbReference type="FunFam" id="3.40.50.300:FF:000078">
    <property type="entry name" value="Elongation factor 4"/>
    <property type="match status" value="1"/>
</dbReference>
<dbReference type="FunFam" id="2.40.30.10:FF:000015">
    <property type="entry name" value="Translation factor GUF1, mitochondrial"/>
    <property type="match status" value="1"/>
</dbReference>
<dbReference type="FunFam" id="3.30.70.240:FF:000007">
    <property type="entry name" value="Translation factor GUF1, mitochondrial"/>
    <property type="match status" value="1"/>
</dbReference>
<dbReference type="FunFam" id="3.30.70.2570:FF:000001">
    <property type="entry name" value="Translation factor GUF1, mitochondrial"/>
    <property type="match status" value="1"/>
</dbReference>
<dbReference type="FunFam" id="3.30.70.870:FF:000004">
    <property type="entry name" value="Translation factor GUF1, mitochondrial"/>
    <property type="match status" value="1"/>
</dbReference>
<dbReference type="Gene3D" id="3.30.70.240">
    <property type="match status" value="1"/>
</dbReference>
<dbReference type="Gene3D" id="3.30.70.2570">
    <property type="entry name" value="Elongation factor 4, C-terminal domain"/>
    <property type="match status" value="1"/>
</dbReference>
<dbReference type="Gene3D" id="3.30.70.870">
    <property type="entry name" value="Elongation Factor G (Translational Gtpase), domain 3"/>
    <property type="match status" value="1"/>
</dbReference>
<dbReference type="Gene3D" id="3.40.50.300">
    <property type="entry name" value="P-loop containing nucleotide triphosphate hydrolases"/>
    <property type="match status" value="1"/>
</dbReference>
<dbReference type="Gene3D" id="2.40.30.10">
    <property type="entry name" value="Translation factors"/>
    <property type="match status" value="1"/>
</dbReference>
<dbReference type="HAMAP" id="MF_00071">
    <property type="entry name" value="LepA"/>
    <property type="match status" value="1"/>
</dbReference>
<dbReference type="InterPro" id="IPR006297">
    <property type="entry name" value="EF-4"/>
</dbReference>
<dbReference type="InterPro" id="IPR035647">
    <property type="entry name" value="EFG_III/V"/>
</dbReference>
<dbReference type="InterPro" id="IPR000640">
    <property type="entry name" value="EFG_V-like"/>
</dbReference>
<dbReference type="InterPro" id="IPR004161">
    <property type="entry name" value="EFTu-like_2"/>
</dbReference>
<dbReference type="InterPro" id="IPR031157">
    <property type="entry name" value="G_TR_CS"/>
</dbReference>
<dbReference type="InterPro" id="IPR038363">
    <property type="entry name" value="LepA_C_sf"/>
</dbReference>
<dbReference type="InterPro" id="IPR013842">
    <property type="entry name" value="LepA_CTD"/>
</dbReference>
<dbReference type="InterPro" id="IPR035654">
    <property type="entry name" value="LepA_IV"/>
</dbReference>
<dbReference type="InterPro" id="IPR027417">
    <property type="entry name" value="P-loop_NTPase"/>
</dbReference>
<dbReference type="InterPro" id="IPR005225">
    <property type="entry name" value="Small_GTP-bd"/>
</dbReference>
<dbReference type="InterPro" id="IPR000795">
    <property type="entry name" value="T_Tr_GTP-bd_dom"/>
</dbReference>
<dbReference type="NCBIfam" id="TIGR01393">
    <property type="entry name" value="lepA"/>
    <property type="match status" value="1"/>
</dbReference>
<dbReference type="NCBIfam" id="TIGR00231">
    <property type="entry name" value="small_GTP"/>
    <property type="match status" value="1"/>
</dbReference>
<dbReference type="PANTHER" id="PTHR43512:SF4">
    <property type="entry name" value="TRANSLATION FACTOR GUF1 HOMOLOG, CHLOROPLASTIC"/>
    <property type="match status" value="1"/>
</dbReference>
<dbReference type="PANTHER" id="PTHR43512">
    <property type="entry name" value="TRANSLATION FACTOR GUF1-RELATED"/>
    <property type="match status" value="1"/>
</dbReference>
<dbReference type="Pfam" id="PF00679">
    <property type="entry name" value="EFG_C"/>
    <property type="match status" value="1"/>
</dbReference>
<dbReference type="Pfam" id="PF00009">
    <property type="entry name" value="GTP_EFTU"/>
    <property type="match status" value="1"/>
</dbReference>
<dbReference type="Pfam" id="PF03144">
    <property type="entry name" value="GTP_EFTU_D2"/>
    <property type="match status" value="1"/>
</dbReference>
<dbReference type="Pfam" id="PF06421">
    <property type="entry name" value="LepA_C"/>
    <property type="match status" value="1"/>
</dbReference>
<dbReference type="PRINTS" id="PR00315">
    <property type="entry name" value="ELONGATNFCT"/>
</dbReference>
<dbReference type="SMART" id="SM00838">
    <property type="entry name" value="EFG_C"/>
    <property type="match status" value="1"/>
</dbReference>
<dbReference type="SUPFAM" id="SSF54980">
    <property type="entry name" value="EF-G C-terminal domain-like"/>
    <property type="match status" value="2"/>
</dbReference>
<dbReference type="SUPFAM" id="SSF52540">
    <property type="entry name" value="P-loop containing nucleoside triphosphate hydrolases"/>
    <property type="match status" value="1"/>
</dbReference>
<dbReference type="PROSITE" id="PS00301">
    <property type="entry name" value="G_TR_1"/>
    <property type="match status" value="1"/>
</dbReference>
<dbReference type="PROSITE" id="PS51722">
    <property type="entry name" value="G_TR_2"/>
    <property type="match status" value="1"/>
</dbReference>
<organism>
    <name type="scientific">Listeria monocytogenes serotype 4b (strain CLIP80459)</name>
    <dbReference type="NCBI Taxonomy" id="568819"/>
    <lineage>
        <taxon>Bacteria</taxon>
        <taxon>Bacillati</taxon>
        <taxon>Bacillota</taxon>
        <taxon>Bacilli</taxon>
        <taxon>Bacillales</taxon>
        <taxon>Listeriaceae</taxon>
        <taxon>Listeria</taxon>
    </lineage>
</organism>
<evidence type="ECO:0000255" key="1">
    <source>
        <dbReference type="HAMAP-Rule" id="MF_00071"/>
    </source>
</evidence>
<comment type="function">
    <text evidence="1">Required for accurate and efficient protein synthesis under certain stress conditions. May act as a fidelity factor of the translation reaction, by catalyzing a one-codon backward translocation of tRNAs on improperly translocated ribosomes. Back-translocation proceeds from a post-translocation (POST) complex to a pre-translocation (PRE) complex, thus giving elongation factor G a second chance to translocate the tRNAs correctly. Binds to ribosomes in a GTP-dependent manner.</text>
</comment>
<comment type="catalytic activity">
    <reaction evidence="1">
        <text>GTP + H2O = GDP + phosphate + H(+)</text>
        <dbReference type="Rhea" id="RHEA:19669"/>
        <dbReference type="ChEBI" id="CHEBI:15377"/>
        <dbReference type="ChEBI" id="CHEBI:15378"/>
        <dbReference type="ChEBI" id="CHEBI:37565"/>
        <dbReference type="ChEBI" id="CHEBI:43474"/>
        <dbReference type="ChEBI" id="CHEBI:58189"/>
        <dbReference type="EC" id="3.6.5.n1"/>
    </reaction>
</comment>
<comment type="subcellular location">
    <subcellularLocation>
        <location evidence="1">Cell membrane</location>
        <topology evidence="1">Peripheral membrane protein</topology>
        <orientation evidence="1">Cytoplasmic side</orientation>
    </subcellularLocation>
</comment>
<comment type="similarity">
    <text evidence="1">Belongs to the TRAFAC class translation factor GTPase superfamily. Classic translation factor GTPase family. LepA subfamily.</text>
</comment>
<feature type="chain" id="PRO_1000202454" description="Elongation factor 4">
    <location>
        <begin position="1"/>
        <end position="608"/>
    </location>
</feature>
<feature type="domain" description="tr-type G">
    <location>
        <begin position="11"/>
        <end position="193"/>
    </location>
</feature>
<feature type="binding site" evidence="1">
    <location>
        <begin position="23"/>
        <end position="28"/>
    </location>
    <ligand>
        <name>GTP</name>
        <dbReference type="ChEBI" id="CHEBI:37565"/>
    </ligand>
</feature>
<feature type="binding site" evidence="1">
    <location>
        <begin position="140"/>
        <end position="143"/>
    </location>
    <ligand>
        <name>GTP</name>
        <dbReference type="ChEBI" id="CHEBI:37565"/>
    </ligand>
</feature>
<accession>C1KVC6</accession>